<comment type="function">
    <text evidence="1">Exhibits S-adenosyl-L-methionine-dependent methyltransferase activity.</text>
</comment>
<comment type="similarity">
    <text evidence="2">Belongs to the UPF0677 family.</text>
</comment>
<reference key="1">
    <citation type="submission" date="2006-06" db="EMBL/GenBank/DDBJ databases">
        <title>Complete sequence of chromosome of Mycobacterium sp. MCS.</title>
        <authorList>
            <consortium name="US DOE Joint Genome Institute"/>
            <person name="Copeland A."/>
            <person name="Lucas S."/>
            <person name="Lapidus A."/>
            <person name="Barry K."/>
            <person name="Detter J.C."/>
            <person name="Glavina del Rio T."/>
            <person name="Hammon N."/>
            <person name="Israni S."/>
            <person name="Dalin E."/>
            <person name="Tice H."/>
            <person name="Pitluck S."/>
            <person name="Martinez M."/>
            <person name="Schmutz J."/>
            <person name="Larimer F."/>
            <person name="Land M."/>
            <person name="Hauser L."/>
            <person name="Kyrpides N."/>
            <person name="Kim E."/>
            <person name="Miller C.D."/>
            <person name="Hughes J.E."/>
            <person name="Anderson A.J."/>
            <person name="Sims R.C."/>
            <person name="Richardson P."/>
        </authorList>
    </citation>
    <scope>NUCLEOTIDE SEQUENCE [LARGE SCALE GENOMIC DNA]</scope>
    <source>
        <strain>MCS</strain>
    </source>
</reference>
<protein>
    <recommendedName>
        <fullName>Putative S-adenosyl-L-methionine-dependent methyltransferase Mmcs_0580</fullName>
        <ecNumber>2.1.1.-</ecNumber>
    </recommendedName>
</protein>
<sequence length="242" mass="26348">MSALAVALARQSESHADCPLFNDPYAQVFIDAALSRGCQLPSDETSERINGIANYASSRTKWFDEYFIAAGAHGLEQMVIVAAGLDARAWRLPWVAGTTLFEIDHPGVLKFKNEALHEHGESPSVSRYVPVPADLSDGWSERLRDAGFDVSEPTAWAVEGLLPYVADGPHLLFDRIHEISPAGSRLAVEAVGTGVADWLSTQGWQVTMIGAQELMTRYGRCGDHSDTDAGMDTVFVNATRTR</sequence>
<evidence type="ECO:0000250" key="1"/>
<evidence type="ECO:0000305" key="2"/>
<organism>
    <name type="scientific">Mycobacterium sp. (strain MCS)</name>
    <dbReference type="NCBI Taxonomy" id="164756"/>
    <lineage>
        <taxon>Bacteria</taxon>
        <taxon>Bacillati</taxon>
        <taxon>Actinomycetota</taxon>
        <taxon>Actinomycetes</taxon>
        <taxon>Mycobacteriales</taxon>
        <taxon>Mycobacteriaceae</taxon>
        <taxon>Mycobacterium</taxon>
    </lineage>
</organism>
<proteinExistence type="inferred from homology"/>
<name>Y580_MYCSS</name>
<accession>Q1BEI3</accession>
<keyword id="KW-0489">Methyltransferase</keyword>
<keyword id="KW-0949">S-adenosyl-L-methionine</keyword>
<keyword id="KW-0808">Transferase</keyword>
<feature type="chain" id="PRO_0000361221" description="Putative S-adenosyl-L-methionine-dependent methyltransferase Mmcs_0580">
    <location>
        <begin position="1"/>
        <end position="242"/>
    </location>
</feature>
<feature type="binding site" evidence="1">
    <location>
        <position position="104"/>
    </location>
    <ligand>
        <name>S-adenosyl-L-methionine</name>
        <dbReference type="ChEBI" id="CHEBI:59789"/>
    </ligand>
</feature>
<feature type="binding site" evidence="1">
    <location>
        <begin position="134"/>
        <end position="135"/>
    </location>
    <ligand>
        <name>S-adenosyl-L-methionine</name>
        <dbReference type="ChEBI" id="CHEBI:59789"/>
    </ligand>
</feature>
<gene>
    <name type="ordered locus">Mmcs_0580</name>
</gene>
<dbReference type="EC" id="2.1.1.-"/>
<dbReference type="EMBL" id="CP000384">
    <property type="protein sequence ID" value="ABG06701.1"/>
    <property type="molecule type" value="Genomic_DNA"/>
</dbReference>
<dbReference type="SMR" id="Q1BEI3"/>
<dbReference type="KEGG" id="mmc:Mmcs_0580"/>
<dbReference type="HOGENOM" id="CLU_056160_2_1_11"/>
<dbReference type="GO" id="GO:0008168">
    <property type="term" value="F:methyltransferase activity"/>
    <property type="evidence" value="ECO:0007669"/>
    <property type="project" value="UniProtKB-KW"/>
</dbReference>
<dbReference type="GO" id="GO:0032259">
    <property type="term" value="P:methylation"/>
    <property type="evidence" value="ECO:0007669"/>
    <property type="project" value="UniProtKB-KW"/>
</dbReference>
<dbReference type="Gene3D" id="3.40.50.150">
    <property type="entry name" value="Vaccinia Virus protein VP39"/>
    <property type="match status" value="1"/>
</dbReference>
<dbReference type="InterPro" id="IPR007213">
    <property type="entry name" value="Ppm1/Ppm2/Tcmp"/>
</dbReference>
<dbReference type="InterPro" id="IPR029063">
    <property type="entry name" value="SAM-dependent_MTases_sf"/>
</dbReference>
<dbReference type="InterPro" id="IPR011610">
    <property type="entry name" value="SAM_mthyl_Trfase_ML2640-like"/>
</dbReference>
<dbReference type="NCBIfam" id="TIGR00027">
    <property type="entry name" value="mthyl_TIGR00027"/>
    <property type="match status" value="1"/>
</dbReference>
<dbReference type="PANTHER" id="PTHR43619">
    <property type="entry name" value="S-ADENOSYL-L-METHIONINE-DEPENDENT METHYLTRANSFERASE YKTD-RELATED"/>
    <property type="match status" value="1"/>
</dbReference>
<dbReference type="PANTHER" id="PTHR43619:SF2">
    <property type="entry name" value="S-ADENOSYL-L-METHIONINE-DEPENDENT METHYLTRANSFERASES SUPERFAMILY PROTEIN"/>
    <property type="match status" value="1"/>
</dbReference>
<dbReference type="Pfam" id="PF04072">
    <property type="entry name" value="LCM"/>
    <property type="match status" value="1"/>
</dbReference>
<dbReference type="SUPFAM" id="SSF53335">
    <property type="entry name" value="S-adenosyl-L-methionine-dependent methyltransferases"/>
    <property type="match status" value="1"/>
</dbReference>